<gene>
    <name evidence="9 12" type="primary">METTL9</name>
    <name evidence="7" type="synonym">DREV</name>
    <name evidence="6" type="ORF">CGI-81</name>
</gene>
<comment type="function">
    <text evidence="2 3 4 5">Protein-histidine N-methyltransferase that specifically catalyzes 1-methylhistidine (pros-methylhistidine) methylation of target proteins (PubMed:33563959, PubMed:34562450, PubMed:37015930, PubMed:37398635). Specifically methylates the second His of proteins with a His-x-His (HxH) motif (where 'x' is preferably a small amino acid), while exploiting the first one as a recognition signature (PubMed:37398635). Catalyzes methylation of target proteins such as S100A9, NDUFB3, SLC39A5, SLC39A7, ARMC6 and DNAJB12; 1-methylhistidine modification may affect the binding of zinc and other metals to its target proteins (PubMed:33563959, PubMed:34562450, PubMed:37015930, PubMed:37398635). Constitutes the main methyltransferase for the 1-methylhistidine modification in cell (PubMed:33563959).</text>
</comment>
<comment type="catalytic activity">
    <reaction evidence="2 3 4 5">
        <text>L-histidyl-[protein] + S-adenosyl-L-methionine = N(pros)-methyl-L-histidyl-[protein] + S-adenosyl-L-homocysteine + H(+)</text>
        <dbReference type="Rhea" id="RHEA:67076"/>
        <dbReference type="Rhea" id="RHEA-COMP:9745"/>
        <dbReference type="Rhea" id="RHEA-COMP:17184"/>
        <dbReference type="ChEBI" id="CHEBI:15378"/>
        <dbReference type="ChEBI" id="CHEBI:29979"/>
        <dbReference type="ChEBI" id="CHEBI:43903"/>
        <dbReference type="ChEBI" id="CHEBI:57856"/>
        <dbReference type="ChEBI" id="CHEBI:59789"/>
    </reaction>
    <physiologicalReaction direction="left-to-right" evidence="2 3 4 5">
        <dbReference type="Rhea" id="RHEA:67077"/>
    </physiologicalReaction>
</comment>
<comment type="biophysicochemical properties">
    <kinetics>
        <KM evidence="5">15.11 uM for a substrate peptide</KM>
        <text evidence="5">kcat is 0.044 sec(-1).</text>
    </kinetics>
</comment>
<comment type="interaction">
    <interactant intactId="EBI-2804879">
        <id>Q9H1A3</id>
    </interactant>
    <interactant intactId="EBI-709754">
        <id>Q9HB07</id>
        <label>MYG1</label>
    </interactant>
    <organismsDiffer>false</organismsDiffer>
    <experiments>3</experiments>
</comment>
<comment type="subcellular location">
    <subcellularLocation>
        <location evidence="3 11">Endoplasmic reticulum</location>
    </subcellularLocation>
    <subcellularLocation>
        <location evidence="11">Mitochondrion</location>
    </subcellularLocation>
    <text evidence="2">Colocalizes with membranous compartments such as the endoplasmic reticulum and mitochondria.</text>
</comment>
<comment type="alternative products">
    <event type="alternative splicing"/>
    <isoform>
        <id>Q9H1A3-1</id>
        <name>1</name>
        <sequence type="displayed"/>
    </isoform>
    <isoform>
        <id>Q9H1A3-2</id>
        <name>2</name>
        <sequence type="described" ref="VSP_030997"/>
    </isoform>
</comment>
<comment type="similarity">
    <text evidence="10">Belongs to the METTL9 family.</text>
</comment>
<comment type="sequence caution" evidence="10">
    <conflict type="erroneous initiation">
        <sequence resource="EMBL-CDS" id="AAD34076"/>
    </conflict>
</comment>
<proteinExistence type="evidence at protein level"/>
<accession>Q9H1A3</accession>
<accession>Q8NBT8</accession>
<accession>Q9BWJ7</accession>
<accession>Q9H1A2</accession>
<accession>Q9Y390</accession>
<organism>
    <name type="scientific">Homo sapiens</name>
    <name type="common">Human</name>
    <dbReference type="NCBI Taxonomy" id="9606"/>
    <lineage>
        <taxon>Eukaryota</taxon>
        <taxon>Metazoa</taxon>
        <taxon>Chordata</taxon>
        <taxon>Craniata</taxon>
        <taxon>Vertebrata</taxon>
        <taxon>Euteleostomi</taxon>
        <taxon>Mammalia</taxon>
        <taxon>Eutheria</taxon>
        <taxon>Euarchontoglires</taxon>
        <taxon>Primates</taxon>
        <taxon>Haplorrhini</taxon>
        <taxon>Catarrhini</taxon>
        <taxon>Hominidae</taxon>
        <taxon>Homo</taxon>
    </lineage>
</organism>
<keyword id="KW-0002">3D-structure</keyword>
<keyword id="KW-0025">Alternative splicing</keyword>
<keyword id="KW-0256">Endoplasmic reticulum</keyword>
<keyword id="KW-0325">Glycoprotein</keyword>
<keyword id="KW-0489">Methyltransferase</keyword>
<keyword id="KW-0496">Mitochondrion</keyword>
<keyword id="KW-1267">Proteomics identification</keyword>
<keyword id="KW-1185">Reference proteome</keyword>
<keyword id="KW-0732">Signal</keyword>
<keyword id="KW-0808">Transferase</keyword>
<name>METL9_HUMAN</name>
<evidence type="ECO:0000255" key="1"/>
<evidence type="ECO:0000269" key="2">
    <source>
    </source>
</evidence>
<evidence type="ECO:0000269" key="3">
    <source>
    </source>
</evidence>
<evidence type="ECO:0000269" key="4">
    <source>
    </source>
</evidence>
<evidence type="ECO:0000269" key="5">
    <source>
    </source>
</evidence>
<evidence type="ECO:0000303" key="6">
    <source>
    </source>
</evidence>
<evidence type="ECO:0000303" key="7">
    <source>
    </source>
</evidence>
<evidence type="ECO:0000303" key="8">
    <source>
    </source>
</evidence>
<evidence type="ECO:0000303" key="9">
    <source>
    </source>
</evidence>
<evidence type="ECO:0000305" key="10"/>
<evidence type="ECO:0000305" key="11">
    <source>
    </source>
</evidence>
<evidence type="ECO:0000312" key="12">
    <source>
        <dbReference type="HGNC" id="HGNC:24586"/>
    </source>
</evidence>
<evidence type="ECO:0007744" key="13">
    <source>
        <dbReference type="PDB" id="7Y9C"/>
    </source>
</evidence>
<evidence type="ECO:0007744" key="14">
    <source>
        <dbReference type="PDB" id="7YF2"/>
    </source>
</evidence>
<evidence type="ECO:0007744" key="15">
    <source>
        <dbReference type="PDB" id="7YF3"/>
    </source>
</evidence>
<evidence type="ECO:0007744" key="16">
    <source>
        <dbReference type="PDB" id="7YF4"/>
    </source>
</evidence>
<evidence type="ECO:0007744" key="17">
    <source>
        <dbReference type="PDB" id="8GZE"/>
    </source>
</evidence>
<evidence type="ECO:0007744" key="18">
    <source>
        <dbReference type="PDB" id="8GZF"/>
    </source>
</evidence>
<evidence type="ECO:0007829" key="19">
    <source>
        <dbReference type="PDB" id="7YF2"/>
    </source>
</evidence>
<evidence type="ECO:0007829" key="20">
    <source>
        <dbReference type="PDB" id="8GZE"/>
    </source>
</evidence>
<evidence type="ECO:0007829" key="21">
    <source>
        <dbReference type="PDB" id="8GZF"/>
    </source>
</evidence>
<sequence>MRLLAGWLCLSLASVWLARRMWTLRSPLTRSLYVNMTSGPGGPAAAAGGRKENHQWYVCNREKLCESLQAVFVQSYLDQGTQIFLNNSIEKSGWLFIQLYHSFVSSVFSLFMSRTSINGLLGRGSMFVFSPDQFQRLLKINPDWKTHRLLDLGAGDGEVTKIMSPHFEEIYATELSETMIWQLQKKKYRVLGINEWQNTGFQYDVISCLNLLDRCDQPLTLLKDIRSVLEPTRGRVILALVLPFHPYVENVGGKWEKPSEILEIKGQNWEEQVNSLPEVFRKAGFVIEAFTRLPYLCEGDMYNDYYVLDDAVFVLKPV</sequence>
<feature type="signal peptide" evidence="1">
    <location>
        <begin position="1"/>
        <end position="18"/>
    </location>
</feature>
<feature type="chain" id="PRO_0000317490" description="Protein-L-histidine N-pros-methyltransferase">
    <location>
        <begin position="19"/>
        <end position="318"/>
    </location>
</feature>
<feature type="binding site" evidence="4 5 13 14 15 16 18">
    <location>
        <position position="174"/>
    </location>
    <ligand>
        <name>S-adenosyl-L-homocysteine</name>
        <dbReference type="ChEBI" id="CHEBI:57856"/>
    </ligand>
</feature>
<feature type="binding site" evidence="4 5 16">
    <location>
        <position position="210"/>
    </location>
    <ligand>
        <name>S-adenosyl-L-homocysteine</name>
        <dbReference type="ChEBI" id="CHEBI:57856"/>
    </ligand>
</feature>
<feature type="binding site" evidence="4 5 13 14 15 16 18">
    <location>
        <position position="295"/>
    </location>
    <ligand>
        <name>S-adenosyl-L-homocysteine</name>
        <dbReference type="ChEBI" id="CHEBI:57856"/>
    </ligand>
</feature>
<feature type="glycosylation site" description="N-linked (GlcNAc...) asparagine" evidence="1">
    <location>
        <position position="35"/>
    </location>
</feature>
<feature type="splice variant" id="VSP_030997" description="In isoform 2." evidence="6 7 8">
    <location>
        <position position="251"/>
    </location>
</feature>
<feature type="mutagenesis site" description="Decreased binding to S-adenosyl-L-homocysteine and substrate proteins." evidence="5">
    <original>T</original>
    <variation>A</variation>
    <location>
        <position position="115"/>
    </location>
</feature>
<feature type="mutagenesis site" description="Decreased binding to S-adenosyl-L-homocysteine and substrate proteins." evidence="5">
    <original>N</original>
    <variation>A</variation>
    <location>
        <position position="118"/>
    </location>
</feature>
<feature type="mutagenesis site" description="Abolished binding to substrate proteins." evidence="5">
    <original>R</original>
    <variation>A</variation>
    <location>
        <position position="123"/>
    </location>
</feature>
<feature type="mutagenesis site" description="Nearly abolished binding to substrate proteins." evidence="5">
    <original>M</original>
    <variation>A</variation>
    <location>
        <position position="126"/>
    </location>
</feature>
<feature type="mutagenesis site" description="Abolished binding to S-adenosyl-L-homocysteine." evidence="5">
    <original>D</original>
    <variation>A</variation>
    <location>
        <position position="151"/>
    </location>
</feature>
<feature type="mutagenesis site" description="Abolished binding to S-adenosyl-L-homocysteine." evidence="5">
    <original>D</original>
    <variation>A</variation>
    <location>
        <position position="156"/>
    </location>
</feature>
<feature type="mutagenesis site" description="Decreased binding to S-adenosyl-L-homocysteine." evidence="5">
    <original>T</original>
    <variation>A</variation>
    <location>
        <position position="173"/>
    </location>
</feature>
<feature type="mutagenesis site" description="Abolished protein-L-histidine N-pros-methyltransferase activity." evidence="2 4">
    <original>E</original>
    <variation>A</variation>
    <location>
        <position position="174"/>
    </location>
</feature>
<feature type="mutagenesis site" description="Abolished binding to S-adenosyl-L-homocysteine." evidence="5">
    <original>N</original>
    <variation>D</variation>
    <location>
        <position position="210"/>
    </location>
</feature>
<feature type="mutagenesis site" description="Abolished binding to substrate proteins." evidence="4 5">
    <original>D</original>
    <variation>A</variation>
    <location>
        <position position="213"/>
    </location>
</feature>
<feature type="mutagenesis site" description="Decreased binding to SLC39A5 substrate." evidence="4">
    <original>R</original>
    <variation>A</variation>
    <location>
        <position position="214"/>
    </location>
</feature>
<feature type="mutagenesis site" description="Abolished binding to S-adenosyl-L-homocysteine and substrate proteins." evidence="5">
    <original>R</original>
    <variation>D</variation>
    <location>
        <position position="214"/>
    </location>
</feature>
<feature type="mutagenesis site" description="Reduced binding to substrate proteins." evidence="5">
    <original>V</original>
    <variation>G</variation>
    <location>
        <position position="241"/>
    </location>
</feature>
<feature type="mutagenesis site" description="Abolished binding to substrate proteins." evidence="5">
    <original>E</original>
    <variation>A</variation>
    <location>
        <position position="249"/>
    </location>
</feature>
<feature type="mutagenesis site" description="Abolished binding to S-adenosyl-L-homocysteine." evidence="5">
    <original>Y</original>
    <variation>A</variation>
    <location>
        <position position="295"/>
    </location>
</feature>
<feature type="mutagenesis site" description="Reduced binding to substrate proteins." evidence="5">
    <original>C</original>
    <variation>A</variation>
    <location>
        <position position="297"/>
    </location>
</feature>
<feature type="mutagenesis site" description="Abolished binding to substrate proteins." evidence="4 5">
    <original>D</original>
    <variation>A</variation>
    <location>
        <position position="300"/>
    </location>
</feature>
<feature type="mutagenesis site" description="Abolished protein-L-histidine N-pros-methyltransferase activity." evidence="4">
    <original>YVL</original>
    <variation>AVA</variation>
    <location>
        <begin position="306"/>
        <end position="308"/>
    </location>
</feature>
<feature type="sequence conflict" description="In Ref. 5; AAD34076." evidence="10" ref="5">
    <original>PA</original>
    <variation>RS</variation>
    <location>
        <begin position="43"/>
        <end position="44"/>
    </location>
</feature>
<feature type="sequence conflict" description="In Ref. 2; BAC11490." evidence="10" ref="2">
    <original>Y</original>
    <variation>C</variation>
    <location>
        <position position="57"/>
    </location>
</feature>
<feature type="helix" evidence="19">
    <location>
        <begin position="54"/>
        <end position="56"/>
    </location>
</feature>
<feature type="helix" evidence="19">
    <location>
        <begin position="61"/>
        <end position="63"/>
    </location>
</feature>
<feature type="helix" evidence="19">
    <location>
        <begin position="66"/>
        <end position="69"/>
    </location>
</feature>
<feature type="strand" evidence="20">
    <location>
        <begin position="71"/>
        <end position="73"/>
    </location>
</feature>
<feature type="helix" evidence="19">
    <location>
        <begin position="79"/>
        <end position="92"/>
    </location>
</feature>
<feature type="helix" evidence="19">
    <location>
        <begin position="95"/>
        <end position="108"/>
    </location>
</feature>
<feature type="turn" evidence="19">
    <location>
        <begin position="109"/>
        <end position="111"/>
    </location>
</feature>
<feature type="helix" evidence="19">
    <location>
        <begin position="114"/>
        <end position="121"/>
    </location>
</feature>
<feature type="strand" evidence="19">
    <location>
        <begin position="126"/>
        <end position="128"/>
    </location>
</feature>
<feature type="helix" evidence="19">
    <location>
        <begin position="131"/>
        <end position="138"/>
    </location>
</feature>
<feature type="strand" evidence="19">
    <location>
        <begin position="146"/>
        <end position="152"/>
    </location>
</feature>
<feature type="helix" evidence="19">
    <location>
        <begin position="160"/>
        <end position="163"/>
    </location>
</feature>
<feature type="helix" evidence="19">
    <location>
        <begin position="164"/>
        <end position="166"/>
    </location>
</feature>
<feature type="strand" evidence="19">
    <location>
        <begin position="167"/>
        <end position="172"/>
    </location>
</feature>
<feature type="helix" evidence="19">
    <location>
        <begin position="177"/>
        <end position="185"/>
    </location>
</feature>
<feature type="strand" evidence="21">
    <location>
        <begin position="189"/>
        <end position="191"/>
    </location>
</feature>
<feature type="turn" evidence="19">
    <location>
        <begin position="193"/>
        <end position="195"/>
    </location>
</feature>
<feature type="helix" evidence="19">
    <location>
        <begin position="196"/>
        <end position="198"/>
    </location>
</feature>
<feature type="strand" evidence="19">
    <location>
        <begin position="199"/>
        <end position="201"/>
    </location>
</feature>
<feature type="strand" evidence="19">
    <location>
        <begin position="203"/>
        <end position="210"/>
    </location>
</feature>
<feature type="turn" evidence="19">
    <location>
        <begin position="212"/>
        <end position="214"/>
    </location>
</feature>
<feature type="helix" evidence="19">
    <location>
        <begin position="218"/>
        <end position="228"/>
    </location>
</feature>
<feature type="turn" evidence="19">
    <location>
        <begin position="231"/>
        <end position="233"/>
    </location>
</feature>
<feature type="strand" evidence="19">
    <location>
        <begin position="235"/>
        <end position="243"/>
    </location>
</feature>
<feature type="helix" evidence="19">
    <location>
        <begin position="251"/>
        <end position="253"/>
    </location>
</feature>
<feature type="helix" evidence="19">
    <location>
        <begin position="269"/>
        <end position="282"/>
    </location>
</feature>
<feature type="strand" evidence="19">
    <location>
        <begin position="285"/>
        <end position="298"/>
    </location>
</feature>
<feature type="strand" evidence="19">
    <location>
        <begin position="304"/>
        <end position="317"/>
    </location>
</feature>
<reference key="1">
    <citation type="journal article" date="2000" name="Immunogenetics">
        <title>The mouse and human IGSF6 (DORA) genes map to the inflammatory bowel disease 1 locus and are embedded in an intron of a gene of unknown function.</title>
        <authorList>
            <person name="Bates E.E.M."/>
            <person name="Kissenpfennig A."/>
            <person name="Peronne C."/>
            <person name="Mattei M.-G."/>
            <person name="Fossiez F."/>
            <person name="Malissen B."/>
            <person name="Lebecque S."/>
        </authorList>
    </citation>
    <scope>NUCLEOTIDE SEQUENCE [MRNA] (ISOFORMS 1 AND 2)</scope>
</reference>
<reference key="2">
    <citation type="journal article" date="2004" name="Nat. Genet.">
        <title>Complete sequencing and characterization of 21,243 full-length human cDNAs.</title>
        <authorList>
            <person name="Ota T."/>
            <person name="Suzuki Y."/>
            <person name="Nishikawa T."/>
            <person name="Otsuki T."/>
            <person name="Sugiyama T."/>
            <person name="Irie R."/>
            <person name="Wakamatsu A."/>
            <person name="Hayashi K."/>
            <person name="Sato H."/>
            <person name="Nagai K."/>
            <person name="Kimura K."/>
            <person name="Makita H."/>
            <person name="Sekine M."/>
            <person name="Obayashi M."/>
            <person name="Nishi T."/>
            <person name="Shibahara T."/>
            <person name="Tanaka T."/>
            <person name="Ishii S."/>
            <person name="Yamamoto J."/>
            <person name="Saito K."/>
            <person name="Kawai Y."/>
            <person name="Isono Y."/>
            <person name="Nakamura Y."/>
            <person name="Nagahari K."/>
            <person name="Murakami K."/>
            <person name="Yasuda T."/>
            <person name="Iwayanagi T."/>
            <person name="Wagatsuma M."/>
            <person name="Shiratori A."/>
            <person name="Sudo H."/>
            <person name="Hosoiri T."/>
            <person name="Kaku Y."/>
            <person name="Kodaira H."/>
            <person name="Kondo H."/>
            <person name="Sugawara M."/>
            <person name="Takahashi M."/>
            <person name="Kanda K."/>
            <person name="Yokoi T."/>
            <person name="Furuya T."/>
            <person name="Kikkawa E."/>
            <person name="Omura Y."/>
            <person name="Abe K."/>
            <person name="Kamihara K."/>
            <person name="Katsuta N."/>
            <person name="Sato K."/>
            <person name="Tanikawa M."/>
            <person name="Yamazaki M."/>
            <person name="Ninomiya K."/>
            <person name="Ishibashi T."/>
            <person name="Yamashita H."/>
            <person name="Murakawa K."/>
            <person name="Fujimori K."/>
            <person name="Tanai H."/>
            <person name="Kimata M."/>
            <person name="Watanabe M."/>
            <person name="Hiraoka S."/>
            <person name="Chiba Y."/>
            <person name="Ishida S."/>
            <person name="Ono Y."/>
            <person name="Takiguchi S."/>
            <person name="Watanabe S."/>
            <person name="Yosida M."/>
            <person name="Hotuta T."/>
            <person name="Kusano J."/>
            <person name="Kanehori K."/>
            <person name="Takahashi-Fujii A."/>
            <person name="Hara H."/>
            <person name="Tanase T.-O."/>
            <person name="Nomura Y."/>
            <person name="Togiya S."/>
            <person name="Komai F."/>
            <person name="Hara R."/>
            <person name="Takeuchi K."/>
            <person name="Arita M."/>
            <person name="Imose N."/>
            <person name="Musashino K."/>
            <person name="Yuuki H."/>
            <person name="Oshima A."/>
            <person name="Sasaki N."/>
            <person name="Aotsuka S."/>
            <person name="Yoshikawa Y."/>
            <person name="Matsunawa H."/>
            <person name="Ichihara T."/>
            <person name="Shiohata N."/>
            <person name="Sano S."/>
            <person name="Moriya S."/>
            <person name="Momiyama H."/>
            <person name="Satoh N."/>
            <person name="Takami S."/>
            <person name="Terashima Y."/>
            <person name="Suzuki O."/>
            <person name="Nakagawa S."/>
            <person name="Senoh A."/>
            <person name="Mizoguchi H."/>
            <person name="Goto Y."/>
            <person name="Shimizu F."/>
            <person name="Wakebe H."/>
            <person name="Hishigaki H."/>
            <person name="Watanabe T."/>
            <person name="Sugiyama A."/>
            <person name="Takemoto M."/>
            <person name="Kawakami B."/>
            <person name="Yamazaki M."/>
            <person name="Watanabe K."/>
            <person name="Kumagai A."/>
            <person name="Itakura S."/>
            <person name="Fukuzumi Y."/>
            <person name="Fujimori Y."/>
            <person name="Komiyama M."/>
            <person name="Tashiro H."/>
            <person name="Tanigami A."/>
            <person name="Fujiwara T."/>
            <person name="Ono T."/>
            <person name="Yamada K."/>
            <person name="Fujii Y."/>
            <person name="Ozaki K."/>
            <person name="Hirao M."/>
            <person name="Ohmori Y."/>
            <person name="Kawabata A."/>
            <person name="Hikiji T."/>
            <person name="Kobatake N."/>
            <person name="Inagaki H."/>
            <person name="Ikema Y."/>
            <person name="Okamoto S."/>
            <person name="Okitani R."/>
            <person name="Kawakami T."/>
            <person name="Noguchi S."/>
            <person name="Itoh T."/>
            <person name="Shigeta K."/>
            <person name="Senba T."/>
            <person name="Matsumura K."/>
            <person name="Nakajima Y."/>
            <person name="Mizuno T."/>
            <person name="Morinaga M."/>
            <person name="Sasaki M."/>
            <person name="Togashi T."/>
            <person name="Oyama M."/>
            <person name="Hata H."/>
            <person name="Watanabe M."/>
            <person name="Komatsu T."/>
            <person name="Mizushima-Sugano J."/>
            <person name="Satoh T."/>
            <person name="Shirai Y."/>
            <person name="Takahashi Y."/>
            <person name="Nakagawa K."/>
            <person name="Okumura K."/>
            <person name="Nagase T."/>
            <person name="Nomura N."/>
            <person name="Kikuchi H."/>
            <person name="Masuho Y."/>
            <person name="Yamashita R."/>
            <person name="Nakai K."/>
            <person name="Yada T."/>
            <person name="Nakamura Y."/>
            <person name="Ohara O."/>
            <person name="Isogai T."/>
            <person name="Sugano S."/>
        </authorList>
    </citation>
    <scope>NUCLEOTIDE SEQUENCE [LARGE SCALE MRNA] (ISOFORM 2)</scope>
    <source>
        <tissue>Embryo</tissue>
    </source>
</reference>
<reference key="3">
    <citation type="submission" date="2005-07" db="EMBL/GenBank/DDBJ databases">
        <authorList>
            <person name="Mural R.J."/>
            <person name="Istrail S."/>
            <person name="Sutton G.G."/>
            <person name="Florea L."/>
            <person name="Halpern A.L."/>
            <person name="Mobarry C.M."/>
            <person name="Lippert R."/>
            <person name="Walenz B."/>
            <person name="Shatkay H."/>
            <person name="Dew I."/>
            <person name="Miller J.R."/>
            <person name="Flanigan M.J."/>
            <person name="Edwards N.J."/>
            <person name="Bolanos R."/>
            <person name="Fasulo D."/>
            <person name="Halldorsson B.V."/>
            <person name="Hannenhalli S."/>
            <person name="Turner R."/>
            <person name="Yooseph S."/>
            <person name="Lu F."/>
            <person name="Nusskern D.R."/>
            <person name="Shue B.C."/>
            <person name="Zheng X.H."/>
            <person name="Zhong F."/>
            <person name="Delcher A.L."/>
            <person name="Huson D.H."/>
            <person name="Kravitz S.A."/>
            <person name="Mouchard L."/>
            <person name="Reinert K."/>
            <person name="Remington K.A."/>
            <person name="Clark A.G."/>
            <person name="Waterman M.S."/>
            <person name="Eichler E.E."/>
            <person name="Adams M.D."/>
            <person name="Hunkapiller M.W."/>
            <person name="Myers E.W."/>
            <person name="Venter J.C."/>
        </authorList>
    </citation>
    <scope>NUCLEOTIDE SEQUENCE [LARGE SCALE GENOMIC DNA]</scope>
</reference>
<reference key="4">
    <citation type="journal article" date="2004" name="Genome Res.">
        <title>The status, quality, and expansion of the NIH full-length cDNA project: the Mammalian Gene Collection (MGC).</title>
        <authorList>
            <consortium name="The MGC Project Team"/>
        </authorList>
    </citation>
    <scope>NUCLEOTIDE SEQUENCE [LARGE SCALE MRNA] (ISOFORM 1)</scope>
    <source>
        <tissue>Eye</tissue>
    </source>
</reference>
<reference key="5">
    <citation type="journal article" date="2000" name="Genome Res.">
        <title>Identification of novel human genes evolutionarily conserved in Caenorhabditis elegans by comparative proteomics.</title>
        <authorList>
            <person name="Lai C.-H."/>
            <person name="Chou C.-Y."/>
            <person name="Ch'ang L.-Y."/>
            <person name="Liu C.-S."/>
            <person name="Lin W.-C."/>
        </authorList>
    </citation>
    <scope>NUCLEOTIDE SEQUENCE [LARGE SCALE MRNA] OF 27-318 (ISOFORM 2)</scope>
</reference>
<reference key="6">
    <citation type="journal article" date="2021" name="J. Biol. Chem.">
        <title>siRNA screening identifies METTL9 as a histidine Npi-methyltransferase that targets the proinflammatory protein S100A9.</title>
        <authorList>
            <person name="Daitoku H."/>
            <person name="Someya M."/>
            <person name="Kako K."/>
            <person name="Hayashi T."/>
            <person name="Tajima T."/>
            <person name="Haruki H."/>
            <person name="Sekiguchi N."/>
            <person name="Uetake T."/>
            <person name="Akimoto Y."/>
            <person name="Fukamizu A."/>
        </authorList>
    </citation>
    <scope>FUNCTION</scope>
    <scope>CATALYTIC ACTIVITY</scope>
    <scope>SUBCELLULAR LOCATION</scope>
</reference>
<reference key="7">
    <citation type="journal article" date="2021" name="Nat. Commun.">
        <title>The methyltransferase METTL9 mediates pervasive 1-methylhistidine modification in mammalian proteomes.</title>
        <authorList>
            <person name="Davydova E."/>
            <person name="Shimazu T."/>
            <person name="Schuhmacher M.K."/>
            <person name="Jakobsson M.E."/>
            <person name="Willemen H.L.D.M."/>
            <person name="Liu T."/>
            <person name="Moen A."/>
            <person name="Ho A.Y.Y."/>
            <person name="Malecki J."/>
            <person name="Schroer L."/>
            <person name="Pinto R."/>
            <person name="Suzuki T."/>
            <person name="Groensberg I.A."/>
            <person name="Sohtome Y."/>
            <person name="Akakabe M."/>
            <person name="Weirich S."/>
            <person name="Kikuchi M."/>
            <person name="Olsen J.V."/>
            <person name="Dohmae N."/>
            <person name="Umehara T."/>
            <person name="Sodeoka M."/>
            <person name="Siino V."/>
            <person name="McDonough M.A."/>
            <person name="Eijkelkamp N."/>
            <person name="Schofield C.J."/>
            <person name="Jeltsch A."/>
            <person name="Shinkai Y."/>
            <person name="Falnes P.O."/>
        </authorList>
    </citation>
    <scope>FUNCTION</scope>
    <scope>CATALYTIC ACTIVITY</scope>
    <scope>SUBCELLULAR LOCATION</scope>
    <scope>MUTAGENESIS OF GLU-174</scope>
</reference>
<reference evidence="13 14 15 16" key="8">
    <citation type="journal article" date="2023" name="Cell Discov.">
        <title>Molecular basis for METTL9-mediated N1-histidine methylation.</title>
        <authorList>
            <person name="Wang X."/>
            <person name="Xie H."/>
            <person name="Guo Q."/>
            <person name="Cao D."/>
            <person name="Ru W."/>
            <person name="Zhao S."/>
            <person name="Zhu Z."/>
            <person name="Zhang J."/>
            <person name="Pan W."/>
            <person name="Yao X."/>
            <person name="Xu C."/>
        </authorList>
    </citation>
    <scope>X-RAY CRYSTALLOGRAPHY (1.69 ANGSTROMS) OF 46-318 IN COMPLEX WITH S-ADENOSYL-L-HOMOCYSTEINE IN COMPLEX WITH S100A9 AND SLC39A5</scope>
    <scope>FUNCTION</scope>
    <scope>CATALYTIC ACTIVITY</scope>
    <scope>MUTAGENESIS OF GLU-174; ASP-213; ARG-214; ASP-300 AND 306-TYR--LEU-308</scope>
</reference>
<reference evidence="17 18" key="9">
    <citation type="journal article" date="2023" name="Cell Insight">
        <title>Molecular basis for protein histidine N1-specific methylation of the 'His-x-His' motifs by METTL9.</title>
        <authorList>
            <person name="Zhao W."/>
            <person name="Zhou Y."/>
            <person name="Li C."/>
            <person name="Bi Y."/>
            <person name="Wang K."/>
            <person name="Ye M."/>
            <person name="Li H."/>
        </authorList>
    </citation>
    <scope>X-RAY CRYSTALLOGRAPHY (2.50 ANGSTROMS) OF 53-318 IN COMPLEX WITH S-ADENOSYL-L-HOMOCYSTEINE AND SLC39A7</scope>
    <scope>FUNCTION</scope>
    <scope>CATALYTIC ACTIVITY</scope>
    <scope>BIOPHYSICOCHEMICAL PROPERTIES</scope>
    <scope>MUTAGENESIS OF THR-115; ASN-118; ARG-123; MET-126; ASP-151; ASP-156; THR-173; ASN-210; ASP-213; ARG-214; VAL-241; GLU-249; TYR-295; CYS-297 AND ASP-300</scope>
</reference>
<protein>
    <recommendedName>
        <fullName evidence="10">Protein-L-histidine N-pros-methyltransferase</fullName>
        <ecNumber evidence="2 3 4 5">2.1.1.-</ecNumber>
    </recommendedName>
    <alternativeName>
        <fullName evidence="7">DORA reverse strand protein</fullName>
        <shortName evidence="7">DREV</shortName>
        <shortName evidence="7">DREV1</shortName>
    </alternativeName>
    <alternativeName>
        <fullName evidence="9">Methyltransferase-like protein 9</fullName>
        <shortName evidence="9">hMETTL9</shortName>
    </alternativeName>
</protein>
<dbReference type="EC" id="2.1.1.-" evidence="2 3 4 5"/>
<dbReference type="EMBL" id="AJ278578">
    <property type="protein sequence ID" value="CAC20438.1"/>
    <property type="molecule type" value="mRNA"/>
</dbReference>
<dbReference type="EMBL" id="AJ278577">
    <property type="protein sequence ID" value="CAC20437.1"/>
    <property type="molecule type" value="mRNA"/>
</dbReference>
<dbReference type="EMBL" id="AJ278581">
    <property type="protein sequence ID" value="CAC20439.1"/>
    <property type="molecule type" value="Genomic_DNA"/>
</dbReference>
<dbReference type="EMBL" id="AK075237">
    <property type="protein sequence ID" value="BAC11490.1"/>
    <property type="molecule type" value="mRNA"/>
</dbReference>
<dbReference type="EMBL" id="AK074529">
    <property type="protein sequence ID" value="BAC11042.1"/>
    <property type="molecule type" value="mRNA"/>
</dbReference>
<dbReference type="EMBL" id="AK075022">
    <property type="protein sequence ID" value="BAC11356.1"/>
    <property type="molecule type" value="mRNA"/>
</dbReference>
<dbReference type="EMBL" id="CH878403">
    <property type="protein sequence ID" value="EAW50517.1"/>
    <property type="molecule type" value="Genomic_DNA"/>
</dbReference>
<dbReference type="EMBL" id="CH878403">
    <property type="protein sequence ID" value="EAW50518.1"/>
    <property type="molecule type" value="Genomic_DNA"/>
</dbReference>
<dbReference type="EMBL" id="BC000195">
    <property type="protein sequence ID" value="AAH00195.2"/>
    <property type="molecule type" value="mRNA"/>
</dbReference>
<dbReference type="EMBL" id="AF151839">
    <property type="protein sequence ID" value="AAD34076.1"/>
    <property type="status" value="ALT_INIT"/>
    <property type="molecule type" value="mRNA"/>
</dbReference>
<dbReference type="CCDS" id="CCDS10598.2">
    <molecule id="Q9H1A3-1"/>
</dbReference>
<dbReference type="CCDS" id="CCDS45440.1">
    <molecule id="Q9H1A3-2"/>
</dbReference>
<dbReference type="RefSeq" id="NP_001070648.1">
    <molecule id="Q9H1A3-2"/>
    <property type="nucleotide sequence ID" value="NM_001077180.3"/>
</dbReference>
<dbReference type="RefSeq" id="NP_001275588.1">
    <property type="nucleotide sequence ID" value="NM_001288659.1"/>
</dbReference>
<dbReference type="RefSeq" id="NP_001275589.1">
    <property type="nucleotide sequence ID" value="NM_001288660.1"/>
</dbReference>
<dbReference type="RefSeq" id="NP_057109.3">
    <molecule id="Q9H1A3-1"/>
    <property type="nucleotide sequence ID" value="NM_016025.4"/>
</dbReference>
<dbReference type="PDB" id="7Y9C">
    <property type="method" value="X-ray"/>
    <property type="resolution" value="2.10 A"/>
    <property type="chains" value="A/B=46-318"/>
</dbReference>
<dbReference type="PDB" id="7YF2">
    <property type="method" value="X-ray"/>
    <property type="resolution" value="1.69 A"/>
    <property type="chains" value="A/B=46-318"/>
</dbReference>
<dbReference type="PDB" id="7YF3">
    <property type="method" value="X-ray"/>
    <property type="resolution" value="3.43 A"/>
    <property type="chains" value="A/B=46-318"/>
</dbReference>
<dbReference type="PDB" id="7YF4">
    <property type="method" value="X-ray"/>
    <property type="resolution" value="2.75 A"/>
    <property type="chains" value="A/B=46-318"/>
</dbReference>
<dbReference type="PDB" id="8GZE">
    <property type="method" value="X-ray"/>
    <property type="resolution" value="3.40 A"/>
    <property type="chains" value="A/B=53-318"/>
</dbReference>
<dbReference type="PDB" id="8GZF">
    <property type="method" value="X-ray"/>
    <property type="resolution" value="2.50 A"/>
    <property type="chains" value="A/B=53-318"/>
</dbReference>
<dbReference type="PDBsum" id="7Y9C"/>
<dbReference type="PDBsum" id="7YF2"/>
<dbReference type="PDBsum" id="7YF3"/>
<dbReference type="PDBsum" id="7YF4"/>
<dbReference type="PDBsum" id="8GZE"/>
<dbReference type="PDBsum" id="8GZF"/>
<dbReference type="SMR" id="Q9H1A3"/>
<dbReference type="BioGRID" id="119297">
    <property type="interactions" value="94"/>
</dbReference>
<dbReference type="FunCoup" id="Q9H1A3">
    <property type="interactions" value="1803"/>
</dbReference>
<dbReference type="IntAct" id="Q9H1A3">
    <property type="interactions" value="57"/>
</dbReference>
<dbReference type="MINT" id="Q9H1A3"/>
<dbReference type="STRING" id="9606.ENSP00000350874"/>
<dbReference type="GlyCosmos" id="Q9H1A3">
    <property type="glycosylation" value="1 site, No reported glycans"/>
</dbReference>
<dbReference type="GlyGen" id="Q9H1A3">
    <property type="glycosylation" value="1 site, 6 N-linked glycans (1 site)"/>
</dbReference>
<dbReference type="iPTMnet" id="Q9H1A3"/>
<dbReference type="PhosphoSitePlus" id="Q9H1A3"/>
<dbReference type="BioMuta" id="METTL9"/>
<dbReference type="DMDM" id="74718034"/>
<dbReference type="jPOST" id="Q9H1A3"/>
<dbReference type="MassIVE" id="Q9H1A3"/>
<dbReference type="PaxDb" id="9606-ENSP00000350874"/>
<dbReference type="PeptideAtlas" id="Q9H1A3"/>
<dbReference type="ProteomicsDB" id="80382">
    <molecule id="Q9H1A3-1"/>
</dbReference>
<dbReference type="ProteomicsDB" id="80383">
    <molecule id="Q9H1A3-2"/>
</dbReference>
<dbReference type="Pumba" id="Q9H1A3"/>
<dbReference type="Antibodypedia" id="25721">
    <property type="antibodies" value="22 antibodies from 11 providers"/>
</dbReference>
<dbReference type="DNASU" id="51108"/>
<dbReference type="Ensembl" id="ENST00000358154.8">
    <molecule id="Q9H1A3-1"/>
    <property type="protein sequence ID" value="ENSP00000350874.3"/>
    <property type="gene ID" value="ENSG00000197006.15"/>
</dbReference>
<dbReference type="Ensembl" id="ENST00000396014.8">
    <molecule id="Q9H1A3-2"/>
    <property type="protein sequence ID" value="ENSP00000379335.4"/>
    <property type="gene ID" value="ENSG00000197006.15"/>
</dbReference>
<dbReference type="GeneID" id="51108"/>
<dbReference type="KEGG" id="hsa:51108"/>
<dbReference type="MANE-Select" id="ENST00000358154.8">
    <property type="protein sequence ID" value="ENSP00000350874.3"/>
    <property type="RefSeq nucleotide sequence ID" value="NM_016025.5"/>
    <property type="RefSeq protein sequence ID" value="NP_057109.3"/>
</dbReference>
<dbReference type="UCSC" id="uc002dje.4">
    <molecule id="Q9H1A3-1"/>
    <property type="organism name" value="human"/>
</dbReference>
<dbReference type="AGR" id="HGNC:24586"/>
<dbReference type="CTD" id="51108"/>
<dbReference type="DisGeNET" id="51108"/>
<dbReference type="GeneCards" id="METTL9"/>
<dbReference type="HGNC" id="HGNC:24586">
    <property type="gene designation" value="METTL9"/>
</dbReference>
<dbReference type="HPA" id="ENSG00000197006">
    <property type="expression patterns" value="Low tissue specificity"/>
</dbReference>
<dbReference type="MIM" id="609388">
    <property type="type" value="gene"/>
</dbReference>
<dbReference type="neXtProt" id="NX_Q9H1A3"/>
<dbReference type="OpenTargets" id="ENSG00000197006"/>
<dbReference type="PharmGKB" id="PA145148428"/>
<dbReference type="VEuPathDB" id="HostDB:ENSG00000197006"/>
<dbReference type="eggNOG" id="KOG3987">
    <property type="taxonomic scope" value="Eukaryota"/>
</dbReference>
<dbReference type="GeneTree" id="ENSGT00390000013648"/>
<dbReference type="InParanoid" id="Q9H1A3"/>
<dbReference type="OMA" id="VEIGGKW"/>
<dbReference type="OrthoDB" id="199041at2759"/>
<dbReference type="PAN-GO" id="Q9H1A3">
    <property type="GO annotations" value="0 GO annotations based on evolutionary models"/>
</dbReference>
<dbReference type="PhylomeDB" id="Q9H1A3"/>
<dbReference type="TreeFam" id="TF314187"/>
<dbReference type="PathwayCommons" id="Q9H1A3"/>
<dbReference type="SignaLink" id="Q9H1A3"/>
<dbReference type="BioGRID-ORCS" id="51108">
    <property type="hits" value="15 hits in 1151 CRISPR screens"/>
</dbReference>
<dbReference type="ChiTaRS" id="METTL9">
    <property type="organism name" value="human"/>
</dbReference>
<dbReference type="GenomeRNAi" id="51108"/>
<dbReference type="Pharos" id="Q9H1A3">
    <property type="development level" value="Tdark"/>
</dbReference>
<dbReference type="PRO" id="PR:Q9H1A3"/>
<dbReference type="Proteomes" id="UP000005640">
    <property type="component" value="Chromosome 16"/>
</dbReference>
<dbReference type="RNAct" id="Q9H1A3">
    <property type="molecule type" value="protein"/>
</dbReference>
<dbReference type="Bgee" id="ENSG00000197006">
    <property type="expression patterns" value="Expressed in secondary oocyte and 208 other cell types or tissues"/>
</dbReference>
<dbReference type="ExpressionAtlas" id="Q9H1A3">
    <property type="expression patterns" value="baseline and differential"/>
</dbReference>
<dbReference type="GO" id="GO:0005783">
    <property type="term" value="C:endoplasmic reticulum"/>
    <property type="evidence" value="ECO:0000314"/>
    <property type="project" value="UniProtKB"/>
</dbReference>
<dbReference type="GO" id="GO:0005739">
    <property type="term" value="C:mitochondrion"/>
    <property type="evidence" value="ECO:0000314"/>
    <property type="project" value="FlyBase"/>
</dbReference>
<dbReference type="GO" id="GO:0106370">
    <property type="term" value="F:protein-L-histidine N-pros-methyltransferase activity"/>
    <property type="evidence" value="ECO:0000314"/>
    <property type="project" value="UniProtKB"/>
</dbReference>
<dbReference type="GO" id="GO:0032259">
    <property type="term" value="P:methylation"/>
    <property type="evidence" value="ECO:0007669"/>
    <property type="project" value="UniProtKB-KW"/>
</dbReference>
<dbReference type="CDD" id="cd02440">
    <property type="entry name" value="AdoMet_MTases"/>
    <property type="match status" value="1"/>
</dbReference>
<dbReference type="Gene3D" id="3.40.50.150">
    <property type="entry name" value="Vaccinia Virus protein VP39"/>
    <property type="match status" value="1"/>
</dbReference>
<dbReference type="InterPro" id="IPR007884">
    <property type="entry name" value="METL9"/>
</dbReference>
<dbReference type="InterPro" id="IPR029063">
    <property type="entry name" value="SAM-dependent_MTases_sf"/>
</dbReference>
<dbReference type="PANTHER" id="PTHR12890">
    <property type="entry name" value="DREV PROTEIN"/>
    <property type="match status" value="1"/>
</dbReference>
<dbReference type="PANTHER" id="PTHR12890:SF0">
    <property type="entry name" value="PROTEIN-L-HISTIDINE N-PROS-METHYLTRANSFERASE"/>
    <property type="match status" value="1"/>
</dbReference>
<dbReference type="Pfam" id="PF05219">
    <property type="entry name" value="DREV"/>
    <property type="match status" value="1"/>
</dbReference>
<dbReference type="SUPFAM" id="SSF53335">
    <property type="entry name" value="S-adenosyl-L-methionine-dependent methyltransferases"/>
    <property type="match status" value="1"/>
</dbReference>